<feature type="chain" id="PRO_0000223145" description="UPF0329 protein ECU01_0100/ECU01_1510/ECU08_0030">
    <location>
        <begin position="1"/>
        <end position="619"/>
    </location>
</feature>
<feature type="region of interest" description="Disordered" evidence="1">
    <location>
        <begin position="350"/>
        <end position="428"/>
    </location>
</feature>
<feature type="compositionally biased region" description="Basic and acidic residues" evidence="1">
    <location>
        <begin position="350"/>
        <end position="384"/>
    </location>
</feature>
<feature type="compositionally biased region" description="Acidic residues" evidence="1">
    <location>
        <begin position="385"/>
        <end position="399"/>
    </location>
</feature>
<feature type="compositionally biased region" description="Basic residues" evidence="1">
    <location>
        <begin position="411"/>
        <end position="428"/>
    </location>
</feature>
<gene>
    <name type="ordered locus">ECU01_0100</name>
</gene>
<gene>
    <name type="ordered locus">ECU01_1510</name>
</gene>
<gene>
    <name type="ordered locus">ECU08_0030</name>
</gene>
<comment type="similarity">
    <text evidence="2">Belongs to the UPF0329 family.</text>
</comment>
<proteinExistence type="inferred from homology"/>
<dbReference type="EMBL" id="AL391737">
    <property type="protein sequence ID" value="CAD24882.1"/>
    <property type="molecule type" value="Genomic_DNA"/>
</dbReference>
<dbReference type="EMBL" id="AL391737">
    <property type="protein sequence ID" value="CAD25022.1"/>
    <property type="molecule type" value="Genomic_DNA"/>
</dbReference>
<dbReference type="EMBL" id="AL590448">
    <property type="protein sequence ID" value="CAD26308.1"/>
    <property type="molecule type" value="Genomic_DNA"/>
</dbReference>
<dbReference type="RefSeq" id="NP_001402098.1">
    <property type="nucleotide sequence ID" value="NM_001415650.1"/>
</dbReference>
<dbReference type="RefSeq" id="NP_597132.1">
    <property type="nucleotide sequence ID" value="NM_001041741.1"/>
</dbReference>
<dbReference type="RefSeq" id="XP_965847.1">
    <property type="nucleotide sequence ID" value="XM_960754.1"/>
</dbReference>
<dbReference type="RefSeq" id="XP_965987.1">
    <property type="nucleotide sequence ID" value="XM_960894.1"/>
</dbReference>
<dbReference type="SMR" id="Q8ST94"/>
<dbReference type="STRING" id="284813.Q8ST94"/>
<dbReference type="GeneID" id="859554"/>
<dbReference type="GeneID" id="860183"/>
<dbReference type="KEGG" id="ecu:ECU08_0030"/>
<dbReference type="VEuPathDB" id="MicrosporidiaDB:ECU01_0100"/>
<dbReference type="VEuPathDB" id="MicrosporidiaDB:ECU01_1510"/>
<dbReference type="VEuPathDB" id="MicrosporidiaDB:ECU08_0030"/>
<dbReference type="HOGENOM" id="CLU_035434_0_0_1"/>
<dbReference type="InParanoid" id="Q8ST94"/>
<dbReference type="Proteomes" id="UP000000819">
    <property type="component" value="Chromosome I"/>
</dbReference>
<dbReference type="Proteomes" id="UP000000819">
    <property type="component" value="Chromosome VIII"/>
</dbReference>
<dbReference type="InterPro" id="IPR022115">
    <property type="entry name" value="DUF3654"/>
</dbReference>
<dbReference type="InterPro" id="IPR011667">
    <property type="entry name" value="UPF0329"/>
</dbReference>
<dbReference type="Pfam" id="PF07753">
    <property type="entry name" value="DUF1609"/>
    <property type="match status" value="1"/>
</dbReference>
<dbReference type="Pfam" id="PF12376">
    <property type="entry name" value="DUF3654"/>
    <property type="match status" value="1"/>
</dbReference>
<protein>
    <recommendedName>
        <fullName>UPF0329 protein ECU01_0100/ECU01_1510/ECU08_0030</fullName>
    </recommendedName>
</protein>
<name>Y110_ENCCU</name>
<keyword id="KW-1185">Reference proteome</keyword>
<sequence length="619" mass="72281">MGSVHGWIAWGGGLHGSDVEESEGMKKVRKVLEKAFSRKLYDSEVERIRTFEKELCLDTRVMIPFIFHGDRVVALPTTRYQDVDKSEKKYVEGVVMQLRRLVWRLMVWMHVPGGSSWIESLINEVFEATVSRDSDPVSLYKGARRRSGIRLMDLVMEVFKQNVSMVSEFGQRLARSAEDRMQGIPGSLSPEERKKEEEMLWKIKEHGERLCTKERQEEMVRAQKIICDVCAYVWEKDEDRMSFIMEVYSRHLCLKIVMPYTDIEVPLISYIDHHKLVSTDEKYKSVDIMAEVFKQAFIEHKGIDDESINNAVREVRERKRLEEMREMEERKRREEERAKNEEELLRMVEREEREKREKREKREESKGRGKRGAGEAKEESKEEDGKEEEGVEAEEEESAEVPLVETAVGGARRKKSLKGKRKGDGHHYKIHSRVLRWKRSAEKIKRELDKGSEERWKNRSIEEIKEQKKVHDIVEVSELIKSKECDRFFFRTGKYMKGGSERWKMVANGILEEGGEKKVGKVEVGLFKGERGESVVYHLMFRPTETERAGMVGGSSFGKGDDVDEIKKEESSDMSGFRYPPGVRCEMTSNGNEFRIEYRNPKNTSEVLRTLTILRIPEI</sequence>
<reference key="1">
    <citation type="journal article" date="2001" name="Genome Res.">
        <title>Sequence and analysis of chromosome I of the amitochondriate intracellular parasite Encephalitozoon cuniculi (Microspora).</title>
        <authorList>
            <person name="Peyret P."/>
            <person name="Katinka M.D."/>
            <person name="Duprat S."/>
            <person name="Duffieux F."/>
            <person name="Barbe V."/>
            <person name="Barbazanges M."/>
            <person name="Weissenbach J."/>
            <person name="Saurin W."/>
            <person name="Vivares C.P."/>
        </authorList>
    </citation>
    <scope>NUCLEOTIDE SEQUENCE [LARGE SCALE GENOMIC DNA]</scope>
    <source>
        <strain>GB-M1</strain>
    </source>
</reference>
<reference key="2">
    <citation type="journal article" date="2001" name="Nature">
        <title>Genome sequence and gene compaction of the eukaryote parasite Encephalitozoon cuniculi.</title>
        <authorList>
            <person name="Katinka M.D."/>
            <person name="Duprat S."/>
            <person name="Cornillot E."/>
            <person name="Metenier G."/>
            <person name="Thomarat F."/>
            <person name="Prensier G."/>
            <person name="Barbe V."/>
            <person name="Peyretaillade E."/>
            <person name="Brottier P."/>
            <person name="Wincker P."/>
            <person name="Delbac F."/>
            <person name="El Alaoui H."/>
            <person name="Peyret P."/>
            <person name="Saurin W."/>
            <person name="Gouy M."/>
            <person name="Weissenbach J."/>
            <person name="Vivares C.P."/>
        </authorList>
    </citation>
    <scope>NUCLEOTIDE SEQUENCE [LARGE SCALE GENOMIC DNA]</scope>
    <source>
        <strain>GB-M1</strain>
    </source>
</reference>
<accession>Q8ST94</accession>
<evidence type="ECO:0000256" key="1">
    <source>
        <dbReference type="SAM" id="MobiDB-lite"/>
    </source>
</evidence>
<evidence type="ECO:0000305" key="2"/>
<organism>
    <name type="scientific">Encephalitozoon cuniculi (strain GB-M1)</name>
    <name type="common">Microsporidian parasite</name>
    <dbReference type="NCBI Taxonomy" id="284813"/>
    <lineage>
        <taxon>Eukaryota</taxon>
        <taxon>Fungi</taxon>
        <taxon>Fungi incertae sedis</taxon>
        <taxon>Microsporidia</taxon>
        <taxon>Unikaryonidae</taxon>
        <taxon>Encephalitozoon</taxon>
    </lineage>
</organism>